<gene>
    <name evidence="1" type="primary">argR</name>
    <name type="ordered locus">Ent638_3672</name>
</gene>
<reference key="1">
    <citation type="journal article" date="2010" name="PLoS Genet.">
        <title>Genome sequence of the plant growth promoting endophytic bacterium Enterobacter sp. 638.</title>
        <authorList>
            <person name="Taghavi S."/>
            <person name="van der Lelie D."/>
            <person name="Hoffman A."/>
            <person name="Zhang Y.B."/>
            <person name="Walla M.D."/>
            <person name="Vangronsveld J."/>
            <person name="Newman L."/>
            <person name="Monchy S."/>
        </authorList>
    </citation>
    <scope>NUCLEOTIDE SEQUENCE [LARGE SCALE GENOMIC DNA]</scope>
    <source>
        <strain>638</strain>
    </source>
</reference>
<accession>A4WF49</accession>
<keyword id="KW-0028">Amino-acid biosynthesis</keyword>
<keyword id="KW-0055">Arginine biosynthesis</keyword>
<keyword id="KW-0963">Cytoplasm</keyword>
<keyword id="KW-0238">DNA-binding</keyword>
<keyword id="KW-0678">Repressor</keyword>
<keyword id="KW-0804">Transcription</keyword>
<keyword id="KW-0805">Transcription regulation</keyword>
<protein>
    <recommendedName>
        <fullName evidence="1">Arginine repressor</fullName>
    </recommendedName>
</protein>
<name>ARGR_ENT38</name>
<proteinExistence type="inferred from homology"/>
<sequence length="156" mass="17085">MRSSSKQEELVKAFKALLKEEKFSSQGEIVLALQEQGFENINQSKVSRMLTKFGAVRTRNAKMEMVYCLPAELGVPTTSSPLKNLVLDIDYNDAVVVIHTSPGAAQLIARLLDSLGKSEGILGTIAGDDTIFTTPANGFSVKDLYEAILMLFEQEL</sequence>
<comment type="function">
    <text evidence="1">Regulates arginine biosynthesis genes.</text>
</comment>
<comment type="pathway">
    <text>Amino-acid biosynthesis; L-arginine biosynthesis [regulation].</text>
</comment>
<comment type="subcellular location">
    <subcellularLocation>
        <location evidence="1">Cytoplasm</location>
    </subcellularLocation>
</comment>
<comment type="similarity">
    <text evidence="1">Belongs to the ArgR family.</text>
</comment>
<organism>
    <name type="scientific">Enterobacter sp. (strain 638)</name>
    <dbReference type="NCBI Taxonomy" id="399742"/>
    <lineage>
        <taxon>Bacteria</taxon>
        <taxon>Pseudomonadati</taxon>
        <taxon>Pseudomonadota</taxon>
        <taxon>Gammaproteobacteria</taxon>
        <taxon>Enterobacterales</taxon>
        <taxon>Enterobacteriaceae</taxon>
        <taxon>Enterobacter</taxon>
    </lineage>
</organism>
<feature type="chain" id="PRO_1000058323" description="Arginine repressor">
    <location>
        <begin position="1"/>
        <end position="156"/>
    </location>
</feature>
<dbReference type="EMBL" id="CP000653">
    <property type="protein sequence ID" value="ABP62329.1"/>
    <property type="molecule type" value="Genomic_DNA"/>
</dbReference>
<dbReference type="RefSeq" id="WP_015960652.1">
    <property type="nucleotide sequence ID" value="NC_009436.1"/>
</dbReference>
<dbReference type="SMR" id="A4WF49"/>
<dbReference type="STRING" id="399742.Ent638_3672"/>
<dbReference type="GeneID" id="93306641"/>
<dbReference type="KEGG" id="ent:Ent638_3672"/>
<dbReference type="eggNOG" id="COG1438">
    <property type="taxonomic scope" value="Bacteria"/>
</dbReference>
<dbReference type="HOGENOM" id="CLU_097103_2_0_6"/>
<dbReference type="OrthoDB" id="7060358at2"/>
<dbReference type="UniPathway" id="UPA00068"/>
<dbReference type="Proteomes" id="UP000000230">
    <property type="component" value="Chromosome"/>
</dbReference>
<dbReference type="GO" id="GO:0005737">
    <property type="term" value="C:cytoplasm"/>
    <property type="evidence" value="ECO:0007669"/>
    <property type="project" value="UniProtKB-SubCell"/>
</dbReference>
<dbReference type="GO" id="GO:0034618">
    <property type="term" value="F:arginine binding"/>
    <property type="evidence" value="ECO:0007669"/>
    <property type="project" value="InterPro"/>
</dbReference>
<dbReference type="GO" id="GO:0003677">
    <property type="term" value="F:DNA binding"/>
    <property type="evidence" value="ECO:0007669"/>
    <property type="project" value="UniProtKB-KW"/>
</dbReference>
<dbReference type="GO" id="GO:0003700">
    <property type="term" value="F:DNA-binding transcription factor activity"/>
    <property type="evidence" value="ECO:0007669"/>
    <property type="project" value="UniProtKB-UniRule"/>
</dbReference>
<dbReference type="GO" id="GO:0006526">
    <property type="term" value="P:L-arginine biosynthetic process"/>
    <property type="evidence" value="ECO:0007669"/>
    <property type="project" value="UniProtKB-UniPathway"/>
</dbReference>
<dbReference type="GO" id="GO:0051259">
    <property type="term" value="P:protein complex oligomerization"/>
    <property type="evidence" value="ECO:0007669"/>
    <property type="project" value="InterPro"/>
</dbReference>
<dbReference type="GO" id="GO:1900079">
    <property type="term" value="P:regulation of arginine biosynthetic process"/>
    <property type="evidence" value="ECO:0007669"/>
    <property type="project" value="UniProtKB-UniRule"/>
</dbReference>
<dbReference type="FunFam" id="1.10.10.10:FF:000074">
    <property type="entry name" value="Arginine repressor"/>
    <property type="match status" value="1"/>
</dbReference>
<dbReference type="FunFam" id="3.30.1360.40:FF:000004">
    <property type="entry name" value="Arginine repressor"/>
    <property type="match status" value="1"/>
</dbReference>
<dbReference type="Gene3D" id="3.30.1360.40">
    <property type="match status" value="1"/>
</dbReference>
<dbReference type="Gene3D" id="1.10.10.10">
    <property type="entry name" value="Winged helix-like DNA-binding domain superfamily/Winged helix DNA-binding domain"/>
    <property type="match status" value="1"/>
</dbReference>
<dbReference type="HAMAP" id="MF_00173">
    <property type="entry name" value="Arg_repressor"/>
    <property type="match status" value="1"/>
</dbReference>
<dbReference type="InterPro" id="IPR001669">
    <property type="entry name" value="Arg_repress"/>
</dbReference>
<dbReference type="InterPro" id="IPR020899">
    <property type="entry name" value="Arg_repress_C"/>
</dbReference>
<dbReference type="InterPro" id="IPR036251">
    <property type="entry name" value="Arg_repress_C_sf"/>
</dbReference>
<dbReference type="InterPro" id="IPR020900">
    <property type="entry name" value="Arg_repress_DNA-bd"/>
</dbReference>
<dbReference type="InterPro" id="IPR036388">
    <property type="entry name" value="WH-like_DNA-bd_sf"/>
</dbReference>
<dbReference type="InterPro" id="IPR036390">
    <property type="entry name" value="WH_DNA-bd_sf"/>
</dbReference>
<dbReference type="NCBIfam" id="TIGR01529">
    <property type="entry name" value="argR_whole"/>
    <property type="match status" value="1"/>
</dbReference>
<dbReference type="NCBIfam" id="NF003457">
    <property type="entry name" value="PRK05066.1"/>
    <property type="match status" value="1"/>
</dbReference>
<dbReference type="PANTHER" id="PTHR34471">
    <property type="entry name" value="ARGININE REPRESSOR"/>
    <property type="match status" value="1"/>
</dbReference>
<dbReference type="PANTHER" id="PTHR34471:SF1">
    <property type="entry name" value="ARGININE REPRESSOR"/>
    <property type="match status" value="1"/>
</dbReference>
<dbReference type="Pfam" id="PF01316">
    <property type="entry name" value="Arg_repressor"/>
    <property type="match status" value="1"/>
</dbReference>
<dbReference type="Pfam" id="PF02863">
    <property type="entry name" value="Arg_repressor_C"/>
    <property type="match status" value="1"/>
</dbReference>
<dbReference type="PRINTS" id="PR01467">
    <property type="entry name" value="ARGREPRESSOR"/>
</dbReference>
<dbReference type="SUPFAM" id="SSF55252">
    <property type="entry name" value="C-terminal domain of arginine repressor"/>
    <property type="match status" value="1"/>
</dbReference>
<dbReference type="SUPFAM" id="SSF46785">
    <property type="entry name" value="Winged helix' DNA-binding domain"/>
    <property type="match status" value="1"/>
</dbReference>
<evidence type="ECO:0000255" key="1">
    <source>
        <dbReference type="HAMAP-Rule" id="MF_00173"/>
    </source>
</evidence>